<dbReference type="EC" id="2.7.9.1" evidence="3"/>
<dbReference type="EMBL" id="AE017197">
    <property type="protein sequence ID" value="AAU03950.1"/>
    <property type="molecule type" value="Genomic_DNA"/>
</dbReference>
<dbReference type="RefSeq" id="WP_011190933.1">
    <property type="nucleotide sequence ID" value="NC_006142.1"/>
</dbReference>
<dbReference type="SMR" id="Q68WP2"/>
<dbReference type="KEGG" id="rty:RT0478"/>
<dbReference type="eggNOG" id="COG0574">
    <property type="taxonomic scope" value="Bacteria"/>
</dbReference>
<dbReference type="eggNOG" id="COG1080">
    <property type="taxonomic scope" value="Bacteria"/>
</dbReference>
<dbReference type="HOGENOM" id="CLU_015345_0_2_5"/>
<dbReference type="OrthoDB" id="9765468at2"/>
<dbReference type="Proteomes" id="UP000000604">
    <property type="component" value="Chromosome"/>
</dbReference>
<dbReference type="GO" id="GO:0005524">
    <property type="term" value="F:ATP binding"/>
    <property type="evidence" value="ECO:0007669"/>
    <property type="project" value="UniProtKB-KW"/>
</dbReference>
<dbReference type="GO" id="GO:0016301">
    <property type="term" value="F:kinase activity"/>
    <property type="evidence" value="ECO:0007669"/>
    <property type="project" value="UniProtKB-KW"/>
</dbReference>
<dbReference type="GO" id="GO:0046872">
    <property type="term" value="F:metal ion binding"/>
    <property type="evidence" value="ECO:0007669"/>
    <property type="project" value="UniProtKB-KW"/>
</dbReference>
<dbReference type="GO" id="GO:0050242">
    <property type="term" value="F:pyruvate, phosphate dikinase activity"/>
    <property type="evidence" value="ECO:0007669"/>
    <property type="project" value="UniProtKB-EC"/>
</dbReference>
<dbReference type="Gene3D" id="1.20.80.30">
    <property type="match status" value="1"/>
</dbReference>
<dbReference type="Gene3D" id="3.30.1490.20">
    <property type="entry name" value="ATP-grasp fold, A domain"/>
    <property type="match status" value="1"/>
</dbReference>
<dbReference type="Gene3D" id="3.30.470.20">
    <property type="entry name" value="ATP-grasp fold, B domain"/>
    <property type="match status" value="1"/>
</dbReference>
<dbReference type="Gene3D" id="3.20.20.60">
    <property type="entry name" value="Phosphoenolpyruvate-binding domains"/>
    <property type="match status" value="1"/>
</dbReference>
<dbReference type="Gene3D" id="3.50.30.10">
    <property type="entry name" value="Phosphohistidine domain"/>
    <property type="match status" value="1"/>
</dbReference>
<dbReference type="Gene3D" id="1.10.189.10">
    <property type="entry name" value="Pyruvate Phosphate Dikinase, domain 2"/>
    <property type="match status" value="1"/>
</dbReference>
<dbReference type="InterPro" id="IPR013815">
    <property type="entry name" value="ATP_grasp_subdomain_1"/>
</dbReference>
<dbReference type="InterPro" id="IPR008279">
    <property type="entry name" value="PEP-util_enz_mobile_dom"/>
</dbReference>
<dbReference type="InterPro" id="IPR018274">
    <property type="entry name" value="PEP_util_AS"/>
</dbReference>
<dbReference type="InterPro" id="IPR000121">
    <property type="entry name" value="PEP_util_C"/>
</dbReference>
<dbReference type="InterPro" id="IPR023151">
    <property type="entry name" value="PEP_util_CS"/>
</dbReference>
<dbReference type="InterPro" id="IPR036637">
    <property type="entry name" value="Phosphohistidine_dom_sf"/>
</dbReference>
<dbReference type="InterPro" id="IPR002192">
    <property type="entry name" value="PPDK_AMP/ATP-bd"/>
</dbReference>
<dbReference type="InterPro" id="IPR010121">
    <property type="entry name" value="Pyruvate_phosphate_dikinase"/>
</dbReference>
<dbReference type="InterPro" id="IPR015813">
    <property type="entry name" value="Pyrv/PenolPyrv_kinase-like_dom"/>
</dbReference>
<dbReference type="InterPro" id="IPR040442">
    <property type="entry name" value="Pyrv_kinase-like_dom_sf"/>
</dbReference>
<dbReference type="NCBIfam" id="NF004531">
    <property type="entry name" value="PRK05878.1"/>
    <property type="match status" value="1"/>
</dbReference>
<dbReference type="NCBIfam" id="TIGR01828">
    <property type="entry name" value="pyru_phos_dikin"/>
    <property type="match status" value="1"/>
</dbReference>
<dbReference type="PANTHER" id="PTHR22931">
    <property type="entry name" value="PHOSPHOENOLPYRUVATE DIKINASE-RELATED"/>
    <property type="match status" value="1"/>
</dbReference>
<dbReference type="PANTHER" id="PTHR22931:SF9">
    <property type="entry name" value="PYRUVATE, PHOSPHATE DIKINASE 1, CHLOROPLASTIC"/>
    <property type="match status" value="1"/>
</dbReference>
<dbReference type="Pfam" id="PF00391">
    <property type="entry name" value="PEP-utilizers"/>
    <property type="match status" value="1"/>
</dbReference>
<dbReference type="Pfam" id="PF02896">
    <property type="entry name" value="PEP-utilizers_C"/>
    <property type="match status" value="1"/>
</dbReference>
<dbReference type="Pfam" id="PF01326">
    <property type="entry name" value="PPDK_N"/>
    <property type="match status" value="3"/>
</dbReference>
<dbReference type="PIRSF" id="PIRSF000853">
    <property type="entry name" value="PPDK"/>
    <property type="match status" value="1"/>
</dbReference>
<dbReference type="SUPFAM" id="SSF56059">
    <property type="entry name" value="Glutathione synthetase ATP-binding domain-like"/>
    <property type="match status" value="1"/>
</dbReference>
<dbReference type="SUPFAM" id="SSF51621">
    <property type="entry name" value="Phosphoenolpyruvate/pyruvate domain"/>
    <property type="match status" value="1"/>
</dbReference>
<dbReference type="SUPFAM" id="SSF52009">
    <property type="entry name" value="Phosphohistidine domain"/>
    <property type="match status" value="1"/>
</dbReference>
<dbReference type="PROSITE" id="PS00742">
    <property type="entry name" value="PEP_ENZYMES_2"/>
    <property type="match status" value="1"/>
</dbReference>
<dbReference type="PROSITE" id="PS00370">
    <property type="entry name" value="PEP_ENZYMES_PHOS_SITE"/>
    <property type="match status" value="1"/>
</dbReference>
<proteinExistence type="inferred from homology"/>
<keyword id="KW-0067">ATP-binding</keyword>
<keyword id="KW-0418">Kinase</keyword>
<keyword id="KW-0460">Magnesium</keyword>
<keyword id="KW-0479">Metal-binding</keyword>
<keyword id="KW-0547">Nucleotide-binding</keyword>
<keyword id="KW-0597">Phosphoprotein</keyword>
<keyword id="KW-0808">Transferase</keyword>
<comment type="function">
    <text evidence="3">Catalyzes the reversible phosphorylation of pyruvate and phosphate.</text>
</comment>
<comment type="catalytic activity">
    <reaction evidence="3">
        <text>pyruvate + phosphate + ATP = phosphoenolpyruvate + AMP + diphosphate + H(+)</text>
        <dbReference type="Rhea" id="RHEA:10756"/>
        <dbReference type="ChEBI" id="CHEBI:15361"/>
        <dbReference type="ChEBI" id="CHEBI:15378"/>
        <dbReference type="ChEBI" id="CHEBI:30616"/>
        <dbReference type="ChEBI" id="CHEBI:33019"/>
        <dbReference type="ChEBI" id="CHEBI:43474"/>
        <dbReference type="ChEBI" id="CHEBI:58702"/>
        <dbReference type="ChEBI" id="CHEBI:456215"/>
        <dbReference type="EC" id="2.7.9.1"/>
    </reaction>
</comment>
<comment type="cofactor">
    <cofactor evidence="2">
        <name>Mg(2+)</name>
        <dbReference type="ChEBI" id="CHEBI:18420"/>
    </cofactor>
</comment>
<comment type="activity regulation">
    <text evidence="1">Activated by light-induced dephosphorylation. Inhibited by dark-induced phosphorylation. Both reactions are catalyzed by PDRP1 (By similarity).</text>
</comment>
<comment type="subunit">
    <text evidence="1">Homodimer.</text>
</comment>
<comment type="domain">
    <text evidence="1">The N-terminal domain contains the ATP/Pi active site, the central domain the pyrophosphate/phosphate carrier histidine, and the C-terminal domain the pyruvate active site.</text>
</comment>
<comment type="PTM">
    <text evidence="1">Phosphorylation of Thr-458 in the dark inactivates the enzyme. Dephosphorylation upon light stimulation reactivates the enzyme (By similarity).</text>
</comment>
<comment type="miscellaneous">
    <text>The reaction takes place in three steps, each mediated by a carrier histidine residue located on the surface of the central domain. The two first partial reactions are catalyzed at an active site located on the N-terminal domain, and the third partial reaction is catalyzed at an active site located on the C-terminal domain. For catalytic turnover, the central domain swivels from the concave surface of the N-terminal domain to that of the C-terminal domain.</text>
</comment>
<comment type="similarity">
    <text evidence="5">Belongs to the PEP-utilizing enzyme family.</text>
</comment>
<protein>
    <recommendedName>
        <fullName>Pyruvate, phosphate dikinase</fullName>
        <ecNumber evidence="3">2.7.9.1</ecNumber>
    </recommendedName>
    <alternativeName>
        <fullName>Pyruvate, orthophosphate dikinase</fullName>
    </alternativeName>
</protein>
<feature type="chain" id="PRO_0000289279" description="Pyruvate, phosphate dikinase">
    <location>
        <begin position="1"/>
        <end position="880"/>
    </location>
</feature>
<feature type="region of interest" description="N-terminal">
    <location>
        <begin position="1"/>
        <end position="348"/>
    </location>
</feature>
<feature type="region of interest" description="Linker 1">
    <location>
        <begin position="349"/>
        <end position="405"/>
    </location>
</feature>
<feature type="region of interest" description="Central">
    <location>
        <begin position="406"/>
        <end position="503"/>
    </location>
</feature>
<feature type="region of interest" description="Linker 2">
    <location>
        <begin position="504"/>
        <end position="538"/>
    </location>
</feature>
<feature type="region of interest" description="C-terminal">
    <location>
        <begin position="539"/>
        <end position="879"/>
    </location>
</feature>
<feature type="active site" description="Tele-phosphohistidine intermediate" evidence="2">
    <location>
        <position position="460"/>
    </location>
</feature>
<feature type="active site" description="Proton donor" evidence="2">
    <location>
        <position position="836"/>
    </location>
</feature>
<feature type="binding site" evidence="4">
    <location>
        <position position="97"/>
    </location>
    <ligand>
        <name>ATP</name>
        <dbReference type="ChEBI" id="CHEBI:30616"/>
    </ligand>
</feature>
<feature type="binding site" evidence="2">
    <location>
        <position position="566"/>
    </location>
    <ligand>
        <name>substrate</name>
    </ligand>
</feature>
<feature type="binding site" evidence="2">
    <location>
        <position position="622"/>
    </location>
    <ligand>
        <name>substrate</name>
    </ligand>
</feature>
<feature type="binding site" evidence="2">
    <location>
        <position position="750"/>
    </location>
    <ligand>
        <name>Mg(2+)</name>
        <dbReference type="ChEBI" id="CHEBI:18420"/>
    </ligand>
</feature>
<feature type="binding site" evidence="2">
    <location>
        <position position="750"/>
    </location>
    <ligand>
        <name>substrate</name>
    </ligand>
</feature>
<feature type="binding site" evidence="2">
    <location>
        <position position="771"/>
    </location>
    <ligand>
        <name>substrate</name>
    </ligand>
</feature>
<feature type="binding site" evidence="2">
    <location>
        <position position="772"/>
    </location>
    <ligand>
        <name>substrate</name>
    </ligand>
</feature>
<feature type="binding site" evidence="2">
    <location>
        <position position="773"/>
    </location>
    <ligand>
        <name>substrate</name>
    </ligand>
</feature>
<feature type="binding site" evidence="2">
    <location>
        <position position="774"/>
    </location>
    <ligand>
        <name>Mg(2+)</name>
        <dbReference type="ChEBI" id="CHEBI:18420"/>
    </ligand>
</feature>
<feature type="binding site" evidence="2">
    <location>
        <position position="774"/>
    </location>
    <ligand>
        <name>substrate</name>
    </ligand>
</feature>
<feature type="modified residue" description="Phosphothreonine; by PDRP1" evidence="1">
    <location>
        <position position="458"/>
    </location>
</feature>
<organism>
    <name type="scientific">Rickettsia typhi (strain ATCC VR-144 / Wilmington)</name>
    <dbReference type="NCBI Taxonomy" id="257363"/>
    <lineage>
        <taxon>Bacteria</taxon>
        <taxon>Pseudomonadati</taxon>
        <taxon>Pseudomonadota</taxon>
        <taxon>Alphaproteobacteria</taxon>
        <taxon>Rickettsiales</taxon>
        <taxon>Rickettsiaceae</taxon>
        <taxon>Rickettsieae</taxon>
        <taxon>Rickettsia</taxon>
        <taxon>typhus group</taxon>
    </lineage>
</organism>
<name>PPDK_RICTY</name>
<accession>Q68WP2</accession>
<gene>
    <name type="primary">ppdK</name>
    <name type="ordered locus">RT0478</name>
</gene>
<reference key="1">
    <citation type="journal article" date="2004" name="J. Bacteriol.">
        <title>Complete genome sequence of Rickettsia typhi and comparison with sequences of other Rickettsiae.</title>
        <authorList>
            <person name="McLeod M.P."/>
            <person name="Qin X."/>
            <person name="Karpathy S.E."/>
            <person name="Gioia J."/>
            <person name="Highlander S.K."/>
            <person name="Fox G.E."/>
            <person name="McNeill T.Z."/>
            <person name="Jiang H."/>
            <person name="Muzny D."/>
            <person name="Jacob L.S."/>
            <person name="Hawes A.C."/>
            <person name="Sodergren E."/>
            <person name="Gill R."/>
            <person name="Hume J."/>
            <person name="Morgan M."/>
            <person name="Fan G."/>
            <person name="Amin A.G."/>
            <person name="Gibbs R.A."/>
            <person name="Hong C."/>
            <person name="Yu X.-J."/>
            <person name="Walker D.H."/>
            <person name="Weinstock G.M."/>
        </authorList>
    </citation>
    <scope>NUCLEOTIDE SEQUENCE [LARGE SCALE GENOMIC DNA]</scope>
    <source>
        <strain>ATCC VR-144 / Wilmington</strain>
    </source>
</reference>
<sequence>MNKLIYYFGNNGSDGNASMKNILGNKGAGLAEMSNLKLPIPNGFTITTELCNYFYKHNNNLPKNFQNELQQAITKLEITTGKIFGSTTSNPLLLSVRSGSTVSMPGMMDTILNLGMNNEVCNALADSCGNKLFALDSYRRFLEMYGSTVLSIPSDLFEQIYEKHKVQADIYKDSDITVELLEKIIDDFKRLHIKYTKQLIKDPYEQLESAIKAVLYSWKNNRAIVYRKLNNISEDFGTAINIQEMVFGNLGKTSATGVVFTRSPSTGEKKLFGEFLINAQGEDIVSGTRTPMPIIANDSNSMQAMMPEVFTKLSQIAKKLEEHYLDMQDIEFTIENNKLYILQTRTAKRTAIAAINIAVQMVEEKLISKEQALMRIDPESLNQLLHTRIDYSKKLTAIAEGLPASPGAATGIVVFSPYDAEKLSHHHKVILVRHDTSPEDINGMHVASGILTIRGGMTSHAAVVARGMGKPCVCGTNNLSIDEQKQILIAGDIVIKQGDIITIDGGSGKIFLGEMPLIQPTFSEESTLILDWADEISSLKVRANAETVNDALVSIKFGAQGIGLCRSEHMFFDKNKIPLVREMIIAPDIERRQCALQKLLPLQTEDFKALFRVMKNKPVNIRLLDPPLHEFLPTTDEDKKNLAHSLNLPLSMIHQRLHAMHEVNPMLGHRGCRLGICLPEIYQMQIEAILTAIFELHKKEHIESNLELMIPLISNVAEIKKLKMDIYAVVKKLEQRYSYKFSFTLGTMIELPRAALGSKKIAKEVDYFSFGTNDLTQTTYGISRDDIASFLPYYLEEKIFESDPFTTLDEEGVGELIKIAIKRGKSSNANLKLGACGEHAGNPTSIAFFHKMNLNYVSCSPYRIPIARIAAAQAKIKQGS</sequence>
<evidence type="ECO:0000250" key="1"/>
<evidence type="ECO:0000250" key="2">
    <source>
        <dbReference type="UniProtKB" id="P11155"/>
    </source>
</evidence>
<evidence type="ECO:0000250" key="3">
    <source>
        <dbReference type="UniProtKB" id="P22983"/>
    </source>
</evidence>
<evidence type="ECO:0000255" key="4"/>
<evidence type="ECO:0000305" key="5"/>